<reference key="1">
    <citation type="journal article" date="2009" name="Genome Res.">
        <title>Newly introduced genomic prophage islands are critical determinants of in vivo competitiveness in the Liverpool epidemic strain of Pseudomonas aeruginosa.</title>
        <authorList>
            <person name="Winstanley C."/>
            <person name="Langille M.G.I."/>
            <person name="Fothergill J.L."/>
            <person name="Kukavica-Ibrulj I."/>
            <person name="Paradis-Bleau C."/>
            <person name="Sanschagrin F."/>
            <person name="Thomson N.R."/>
            <person name="Winsor G.L."/>
            <person name="Quail M.A."/>
            <person name="Lennard N."/>
            <person name="Bignell A."/>
            <person name="Clarke L."/>
            <person name="Seeger K."/>
            <person name="Saunders D."/>
            <person name="Harris D."/>
            <person name="Parkhill J."/>
            <person name="Hancock R.E.W."/>
            <person name="Brinkman F.S.L."/>
            <person name="Levesque R.C."/>
        </authorList>
    </citation>
    <scope>NUCLEOTIDE SEQUENCE [LARGE SCALE GENOMIC DNA]</scope>
    <source>
        <strain>LESB58</strain>
    </source>
</reference>
<comment type="cofactor">
    <cofactor evidence="1">
        <name>Zn(2+)</name>
        <dbReference type="ChEBI" id="CHEBI:29105"/>
    </cofactor>
</comment>
<comment type="similarity">
    <text evidence="1">Belongs to the peptidase M18 family.</text>
</comment>
<sequence length="429" mass="46659">MRAELNQGLIDFLKASPTPFHATASLARRLEAAGYRRLDERDAWHTETGGRYYVTRNDSSLIAIRLGRRSPLESGFRLVGAHTDSPCLRVKPNPEIARNGFLQLGVEVYGGALFAPWFDRDLSLAGRVTFRANGKLESRLVDFRKAIAVIPNLAIHLNRAANEGWPINAQNELPPIIAQLAPGEAADFRLLLDEQLLREHGITADVVLDYELSFYDTQSAAVVGLNDEFIAGARLDNLLSCHAGLEALLNAEGDENCILVCTDHEEVGSCSHCGADGPFLEQVLRRLLPEGDAFSRAIQRSLLVSADNAHGVHPNYADRHDANHGPALNGGPVIKINSNQRYATNSETAGFFRHLCQDSEVPVQSFVTRSDMGCGSTIGPITASQVGVRTVDIGLPTFAMHSIRELAGSHDLAHLVKVLGAFYASSELP</sequence>
<feature type="chain" id="PRO_1000125490" description="Probable M18 family aminopeptidase 2">
    <location>
        <begin position="1"/>
        <end position="429"/>
    </location>
</feature>
<feature type="binding site" evidence="1">
    <location>
        <position position="82"/>
    </location>
    <ligand>
        <name>Zn(2+)</name>
        <dbReference type="ChEBI" id="CHEBI:29105"/>
    </ligand>
</feature>
<feature type="binding site" evidence="1">
    <location>
        <position position="156"/>
    </location>
    <ligand>
        <name>Zn(2+)</name>
        <dbReference type="ChEBI" id="CHEBI:29105"/>
    </ligand>
</feature>
<feature type="binding site" evidence="1">
    <location>
        <position position="401"/>
    </location>
    <ligand>
        <name>Zn(2+)</name>
        <dbReference type="ChEBI" id="CHEBI:29105"/>
    </ligand>
</feature>
<evidence type="ECO:0000255" key="1">
    <source>
        <dbReference type="HAMAP-Rule" id="MF_00467"/>
    </source>
</evidence>
<accession>B7V7X2</accession>
<dbReference type="EC" id="3.4.11.-" evidence="1"/>
<dbReference type="EMBL" id="FM209186">
    <property type="protein sequence ID" value="CAW26548.1"/>
    <property type="molecule type" value="Genomic_DNA"/>
</dbReference>
<dbReference type="RefSeq" id="WP_003114800.1">
    <property type="nucleotide sequence ID" value="NC_011770.1"/>
</dbReference>
<dbReference type="SMR" id="B7V7X2"/>
<dbReference type="KEGG" id="pag:PLES_18201"/>
<dbReference type="HOGENOM" id="CLU_019532_2_0_6"/>
<dbReference type="GO" id="GO:0005737">
    <property type="term" value="C:cytoplasm"/>
    <property type="evidence" value="ECO:0007669"/>
    <property type="project" value="UniProtKB-ARBA"/>
</dbReference>
<dbReference type="GO" id="GO:0004177">
    <property type="term" value="F:aminopeptidase activity"/>
    <property type="evidence" value="ECO:0007669"/>
    <property type="project" value="UniProtKB-UniRule"/>
</dbReference>
<dbReference type="GO" id="GO:0008237">
    <property type="term" value="F:metallopeptidase activity"/>
    <property type="evidence" value="ECO:0007669"/>
    <property type="project" value="UniProtKB-UniRule"/>
</dbReference>
<dbReference type="GO" id="GO:0008270">
    <property type="term" value="F:zinc ion binding"/>
    <property type="evidence" value="ECO:0007669"/>
    <property type="project" value="UniProtKB-UniRule"/>
</dbReference>
<dbReference type="GO" id="GO:0006508">
    <property type="term" value="P:proteolysis"/>
    <property type="evidence" value="ECO:0007669"/>
    <property type="project" value="UniProtKB-UniRule"/>
</dbReference>
<dbReference type="CDD" id="cd05639">
    <property type="entry name" value="M18"/>
    <property type="match status" value="1"/>
</dbReference>
<dbReference type="FunFam" id="2.30.250.10:FF:000003">
    <property type="entry name" value="Probable M18 family aminopeptidase 2"/>
    <property type="match status" value="1"/>
</dbReference>
<dbReference type="Gene3D" id="2.30.250.10">
    <property type="entry name" value="Aminopeptidase i, Domain 2"/>
    <property type="match status" value="1"/>
</dbReference>
<dbReference type="Gene3D" id="3.40.630.10">
    <property type="entry name" value="Zn peptidases"/>
    <property type="match status" value="1"/>
</dbReference>
<dbReference type="HAMAP" id="MF_00467">
    <property type="entry name" value="Aminopeptidase_M18_2"/>
    <property type="match status" value="1"/>
</dbReference>
<dbReference type="InterPro" id="IPR022984">
    <property type="entry name" value="M18_aminopeptidase_2"/>
</dbReference>
<dbReference type="InterPro" id="IPR001948">
    <property type="entry name" value="Peptidase_M18"/>
</dbReference>
<dbReference type="InterPro" id="IPR023358">
    <property type="entry name" value="Peptidase_M18_dom2"/>
</dbReference>
<dbReference type="NCBIfam" id="NF002759">
    <property type="entry name" value="PRK02813.1"/>
    <property type="match status" value="1"/>
</dbReference>
<dbReference type="PANTHER" id="PTHR28570">
    <property type="entry name" value="ASPARTYL AMINOPEPTIDASE"/>
    <property type="match status" value="1"/>
</dbReference>
<dbReference type="PANTHER" id="PTHR28570:SF3">
    <property type="entry name" value="ASPARTYL AMINOPEPTIDASE"/>
    <property type="match status" value="1"/>
</dbReference>
<dbReference type="Pfam" id="PF02127">
    <property type="entry name" value="Peptidase_M18"/>
    <property type="match status" value="1"/>
</dbReference>
<dbReference type="PRINTS" id="PR00932">
    <property type="entry name" value="AMINO1PTASE"/>
</dbReference>
<dbReference type="SUPFAM" id="SSF101821">
    <property type="entry name" value="Aminopeptidase/glucanase lid domain"/>
    <property type="match status" value="1"/>
</dbReference>
<dbReference type="SUPFAM" id="SSF53187">
    <property type="entry name" value="Zn-dependent exopeptidases"/>
    <property type="match status" value="1"/>
</dbReference>
<name>APEB_PSEA8</name>
<keyword id="KW-0031">Aminopeptidase</keyword>
<keyword id="KW-0378">Hydrolase</keyword>
<keyword id="KW-0479">Metal-binding</keyword>
<keyword id="KW-0482">Metalloprotease</keyword>
<keyword id="KW-0645">Protease</keyword>
<keyword id="KW-0862">Zinc</keyword>
<protein>
    <recommendedName>
        <fullName evidence="1">Probable M18 family aminopeptidase 2</fullName>
        <ecNumber evidence="1">3.4.11.-</ecNumber>
    </recommendedName>
</protein>
<gene>
    <name evidence="1" type="primary">apeB</name>
    <name type="ordered locus">PLES_18201</name>
</gene>
<organism>
    <name type="scientific">Pseudomonas aeruginosa (strain LESB58)</name>
    <dbReference type="NCBI Taxonomy" id="557722"/>
    <lineage>
        <taxon>Bacteria</taxon>
        <taxon>Pseudomonadati</taxon>
        <taxon>Pseudomonadota</taxon>
        <taxon>Gammaproteobacteria</taxon>
        <taxon>Pseudomonadales</taxon>
        <taxon>Pseudomonadaceae</taxon>
        <taxon>Pseudomonas</taxon>
    </lineage>
</organism>
<proteinExistence type="inferred from homology"/>